<organism>
    <name type="scientific">Halobacterium salinarum (strain ATCC 700922 / JCM 11081 / NRC-1)</name>
    <name type="common">Halobacterium halobium</name>
    <dbReference type="NCBI Taxonomy" id="64091"/>
    <lineage>
        <taxon>Archaea</taxon>
        <taxon>Methanobacteriati</taxon>
        <taxon>Methanobacteriota</taxon>
        <taxon>Stenosarchaea group</taxon>
        <taxon>Halobacteria</taxon>
        <taxon>Halobacteriales</taxon>
        <taxon>Halobacteriaceae</taxon>
        <taxon>Halobacterium</taxon>
        <taxon>Halobacterium salinarum NRC-34001</taxon>
    </lineage>
</organism>
<accession>Q9HSS7</accession>
<comment type="catalytic activity">
    <reaction evidence="1">
        <text>D-glyceraldehyde 3-phosphate + phosphate + NADP(+) = (2R)-3-phospho-glyceroyl phosphate + NADPH + H(+)</text>
        <dbReference type="Rhea" id="RHEA:10296"/>
        <dbReference type="ChEBI" id="CHEBI:15378"/>
        <dbReference type="ChEBI" id="CHEBI:43474"/>
        <dbReference type="ChEBI" id="CHEBI:57604"/>
        <dbReference type="ChEBI" id="CHEBI:57783"/>
        <dbReference type="ChEBI" id="CHEBI:58349"/>
        <dbReference type="ChEBI" id="CHEBI:59776"/>
        <dbReference type="EC" id="1.2.1.59"/>
    </reaction>
</comment>
<comment type="catalytic activity">
    <reaction evidence="1">
        <text>D-glyceraldehyde 3-phosphate + phosphate + NAD(+) = (2R)-3-phospho-glyceroyl phosphate + NADH + H(+)</text>
        <dbReference type="Rhea" id="RHEA:10300"/>
        <dbReference type="ChEBI" id="CHEBI:15378"/>
        <dbReference type="ChEBI" id="CHEBI:43474"/>
        <dbReference type="ChEBI" id="CHEBI:57540"/>
        <dbReference type="ChEBI" id="CHEBI:57604"/>
        <dbReference type="ChEBI" id="CHEBI:57945"/>
        <dbReference type="ChEBI" id="CHEBI:59776"/>
        <dbReference type="EC" id="1.2.1.59"/>
    </reaction>
</comment>
<comment type="pathway">
    <text evidence="1">Carbohydrate degradation; glycolysis; pyruvate from D-glyceraldehyde 3-phosphate: step 1/5.</text>
</comment>
<comment type="subunit">
    <text evidence="1">Homotetramer.</text>
</comment>
<comment type="subcellular location">
    <subcellularLocation>
        <location evidence="1">Cytoplasm</location>
    </subcellularLocation>
</comment>
<comment type="similarity">
    <text evidence="1">Belongs to the glyceraldehyde-3-phosphate dehydrogenase family.</text>
</comment>
<name>G3P_HALSA</name>
<gene>
    <name evidence="1" type="primary">gap</name>
    <name type="synonym">gapB</name>
    <name type="ordered locus">VNG_0095G</name>
</gene>
<feature type="chain" id="PRO_0000145717" description="Glyceraldehyde-3-phosphate dehydrogenase">
    <location>
        <begin position="1"/>
        <end position="335"/>
    </location>
</feature>
<feature type="active site" description="Nucleophile" evidence="1">
    <location>
        <position position="140"/>
    </location>
</feature>
<feature type="binding site" evidence="1">
    <location>
        <begin position="11"/>
        <end position="12"/>
    </location>
    <ligand>
        <name>NAD(+)</name>
        <dbReference type="ChEBI" id="CHEBI:57540"/>
    </ligand>
</feature>
<feature type="binding site" evidence="1">
    <location>
        <position position="110"/>
    </location>
    <ligand>
        <name>NAD(+)</name>
        <dbReference type="ChEBI" id="CHEBI:57540"/>
    </ligand>
</feature>
<feature type="binding site" evidence="1">
    <location>
        <begin position="139"/>
        <end position="141"/>
    </location>
    <ligand>
        <name>D-glyceraldehyde 3-phosphate</name>
        <dbReference type="ChEBI" id="CHEBI:59776"/>
    </ligand>
</feature>
<feature type="binding site" evidence="1">
    <location>
        <position position="168"/>
    </location>
    <ligand>
        <name>NAD(+)</name>
        <dbReference type="ChEBI" id="CHEBI:57540"/>
    </ligand>
</feature>
<feature type="binding site" evidence="1">
    <location>
        <begin position="194"/>
        <end position="195"/>
    </location>
    <ligand>
        <name>D-glyceraldehyde 3-phosphate</name>
        <dbReference type="ChEBI" id="CHEBI:59776"/>
    </ligand>
</feature>
<feature type="binding site" evidence="1">
    <location>
        <position position="301"/>
    </location>
    <ligand>
        <name>NAD(+)</name>
        <dbReference type="ChEBI" id="CHEBI:57540"/>
    </ligand>
</feature>
<dbReference type="EC" id="1.2.1.59" evidence="1"/>
<dbReference type="EMBL" id="AE004437">
    <property type="protein sequence ID" value="AAG18725.1"/>
    <property type="molecule type" value="Genomic_DNA"/>
</dbReference>
<dbReference type="PIR" id="A84170">
    <property type="entry name" value="A84170"/>
</dbReference>
<dbReference type="RefSeq" id="WP_010902020.1">
    <property type="nucleotide sequence ID" value="NC_002607.1"/>
</dbReference>
<dbReference type="SMR" id="Q9HSS7"/>
<dbReference type="FunCoup" id="Q9HSS7">
    <property type="interactions" value="97"/>
</dbReference>
<dbReference type="STRING" id="64091.VNG_0095G"/>
<dbReference type="PaxDb" id="64091-VNG_0095G"/>
<dbReference type="KEGG" id="hal:VNG_0095G"/>
<dbReference type="PATRIC" id="fig|64091.14.peg.61"/>
<dbReference type="HOGENOM" id="CLU_069533_0_0_2"/>
<dbReference type="InParanoid" id="Q9HSS7"/>
<dbReference type="OrthoDB" id="295712at2157"/>
<dbReference type="PhylomeDB" id="Q9HSS7"/>
<dbReference type="UniPathway" id="UPA00109">
    <property type="reaction ID" value="UER00184"/>
</dbReference>
<dbReference type="Proteomes" id="UP000000554">
    <property type="component" value="Chromosome"/>
</dbReference>
<dbReference type="GO" id="GO:0005737">
    <property type="term" value="C:cytoplasm"/>
    <property type="evidence" value="ECO:0007669"/>
    <property type="project" value="UniProtKB-SubCell"/>
</dbReference>
<dbReference type="GO" id="GO:0008839">
    <property type="term" value="F:4-hydroxy-tetrahydrodipicolinate reductase"/>
    <property type="evidence" value="ECO:0007669"/>
    <property type="project" value="InterPro"/>
</dbReference>
<dbReference type="GO" id="GO:0004365">
    <property type="term" value="F:glyceraldehyde-3-phosphate dehydrogenase (NAD+) (phosphorylating) activity"/>
    <property type="evidence" value="ECO:0007669"/>
    <property type="project" value="UniProtKB-UniRule"/>
</dbReference>
<dbReference type="GO" id="GO:0047100">
    <property type="term" value="F:glyceraldehyde-3-phosphate dehydrogenase (NADP+) (phosphorylating) activity"/>
    <property type="evidence" value="ECO:0007669"/>
    <property type="project" value="RHEA"/>
</dbReference>
<dbReference type="GO" id="GO:0051287">
    <property type="term" value="F:NAD binding"/>
    <property type="evidence" value="ECO:0007669"/>
    <property type="project" value="InterPro"/>
</dbReference>
<dbReference type="GO" id="GO:0050661">
    <property type="term" value="F:NADP binding"/>
    <property type="evidence" value="ECO:0007669"/>
    <property type="project" value="InterPro"/>
</dbReference>
<dbReference type="GO" id="GO:0006096">
    <property type="term" value="P:glycolytic process"/>
    <property type="evidence" value="ECO:0007669"/>
    <property type="project" value="UniProtKB-UniRule"/>
</dbReference>
<dbReference type="GO" id="GO:0009089">
    <property type="term" value="P:lysine biosynthetic process via diaminopimelate"/>
    <property type="evidence" value="ECO:0007669"/>
    <property type="project" value="InterPro"/>
</dbReference>
<dbReference type="CDD" id="cd18127">
    <property type="entry name" value="GAPDH_II_C"/>
    <property type="match status" value="1"/>
</dbReference>
<dbReference type="CDD" id="cd02278">
    <property type="entry name" value="GAPDH_II_N"/>
    <property type="match status" value="1"/>
</dbReference>
<dbReference type="Gene3D" id="3.30.360.10">
    <property type="entry name" value="Dihydrodipicolinate Reductase, domain 2"/>
    <property type="match status" value="1"/>
</dbReference>
<dbReference type="Gene3D" id="3.40.50.720">
    <property type="entry name" value="NAD(P)-binding Rossmann-like Domain"/>
    <property type="match status" value="1"/>
</dbReference>
<dbReference type="HAMAP" id="MF_00559">
    <property type="entry name" value="G3P_dehdrog_arch"/>
    <property type="match status" value="1"/>
</dbReference>
<dbReference type="InterPro" id="IPR000846">
    <property type="entry name" value="DapB_N"/>
</dbReference>
<dbReference type="InterPro" id="IPR020831">
    <property type="entry name" value="GlycerAld/Erythrose_P_DH"/>
</dbReference>
<dbReference type="InterPro" id="IPR020830">
    <property type="entry name" value="GlycerAld_3-P_DH_AS"/>
</dbReference>
<dbReference type="InterPro" id="IPR020829">
    <property type="entry name" value="GlycerAld_3-P_DH_cat"/>
</dbReference>
<dbReference type="InterPro" id="IPR020828">
    <property type="entry name" value="GlycerAld_3-P_DH_NAD(P)-bd"/>
</dbReference>
<dbReference type="InterPro" id="IPR006436">
    <property type="entry name" value="Glyceraldehyde-3-P_DH_2_arc"/>
</dbReference>
<dbReference type="InterPro" id="IPR036291">
    <property type="entry name" value="NAD(P)-bd_dom_sf"/>
</dbReference>
<dbReference type="NCBIfam" id="TIGR01546">
    <property type="entry name" value="GAPDH-II_archae"/>
    <property type="match status" value="1"/>
</dbReference>
<dbReference type="NCBIfam" id="NF003251">
    <property type="entry name" value="PRK04207.1"/>
    <property type="match status" value="1"/>
</dbReference>
<dbReference type="Pfam" id="PF01113">
    <property type="entry name" value="DapB_N"/>
    <property type="match status" value="1"/>
</dbReference>
<dbReference type="Pfam" id="PF02800">
    <property type="entry name" value="Gp_dh_C"/>
    <property type="match status" value="1"/>
</dbReference>
<dbReference type="PIRSF" id="PIRSF000149">
    <property type="entry name" value="GAP_DH"/>
    <property type="match status" value="1"/>
</dbReference>
<dbReference type="SMART" id="SM00846">
    <property type="entry name" value="Gp_dh_N"/>
    <property type="match status" value="1"/>
</dbReference>
<dbReference type="SUPFAM" id="SSF55347">
    <property type="entry name" value="Glyceraldehyde-3-phosphate dehydrogenase-like, C-terminal domain"/>
    <property type="match status" value="1"/>
</dbReference>
<dbReference type="SUPFAM" id="SSF51735">
    <property type="entry name" value="NAD(P)-binding Rossmann-fold domains"/>
    <property type="match status" value="1"/>
</dbReference>
<dbReference type="PROSITE" id="PS00071">
    <property type="entry name" value="GAPDH"/>
    <property type="match status" value="1"/>
</dbReference>
<reference key="1">
    <citation type="journal article" date="2000" name="Proc. Natl. Acad. Sci. U.S.A.">
        <title>Genome sequence of Halobacterium species NRC-1.</title>
        <authorList>
            <person name="Ng W.V."/>
            <person name="Kennedy S.P."/>
            <person name="Mahairas G.G."/>
            <person name="Berquist B."/>
            <person name="Pan M."/>
            <person name="Shukla H.D."/>
            <person name="Lasky S.R."/>
            <person name="Baliga N.S."/>
            <person name="Thorsson V."/>
            <person name="Sbrogna J."/>
            <person name="Swartzell S."/>
            <person name="Weir D."/>
            <person name="Hall J."/>
            <person name="Dahl T.A."/>
            <person name="Welti R."/>
            <person name="Goo Y.A."/>
            <person name="Leithauser B."/>
            <person name="Keller K."/>
            <person name="Cruz R."/>
            <person name="Danson M.J."/>
            <person name="Hough D.W."/>
            <person name="Maddocks D.G."/>
            <person name="Jablonski P.E."/>
            <person name="Krebs M.P."/>
            <person name="Angevine C.M."/>
            <person name="Dale H."/>
            <person name="Isenbarger T.A."/>
            <person name="Peck R.F."/>
            <person name="Pohlschroder M."/>
            <person name="Spudich J.L."/>
            <person name="Jung K.-H."/>
            <person name="Alam M."/>
            <person name="Freitas T."/>
            <person name="Hou S."/>
            <person name="Daniels C.J."/>
            <person name="Dennis P.P."/>
            <person name="Omer A.D."/>
            <person name="Ebhardt H."/>
            <person name="Lowe T.M."/>
            <person name="Liang P."/>
            <person name="Riley M."/>
            <person name="Hood L."/>
            <person name="DasSarma S."/>
        </authorList>
    </citation>
    <scope>NUCLEOTIDE SEQUENCE [LARGE SCALE GENOMIC DNA]</scope>
    <source>
        <strain>ATCC 700922 / JCM 11081 / NRC-1</strain>
    </source>
</reference>
<keyword id="KW-0963">Cytoplasm</keyword>
<keyword id="KW-0324">Glycolysis</keyword>
<keyword id="KW-0520">NAD</keyword>
<keyword id="KW-0521">NADP</keyword>
<keyword id="KW-0560">Oxidoreductase</keyword>
<keyword id="KW-1185">Reference proteome</keyword>
<proteinExistence type="inferred from homology"/>
<protein>
    <recommendedName>
        <fullName evidence="1">Glyceraldehyde-3-phosphate dehydrogenase</fullName>
        <shortName evidence="1">GAPDH</shortName>
        <ecNumber evidence="1">1.2.1.59</ecNumber>
    </recommendedName>
    <alternativeName>
        <fullName evidence="1">NAD(P)-dependent glyceraldehyde-3-phosphate dehydrogenase</fullName>
    </alternativeName>
</protein>
<sequence>MIRVGINGYGTIGKRVADAVAAQPDMTVAGVAKTSPNFEATQARKRGFDLYTAVEDRADQFPAAGIETAGPVDDLIADSDVVVDATPSGVGAENRSRYAAHDTPAIYQGGEDASVADVSFNARANFEAAADADHVRVVSCNTTGLSRLLAPLREQYGIEKVRATLVRRGGDPGQTDRGPINDILPDPITIPSHHGPDVNTIFPDLDIDTLGMKVPATLMHMHSINVTLERDPDAADVRDVLAGQSRIMLLDDDLGIDGTGPLKEYAQDMGRPRGDLWENCLWGESVTMDGRDFYCFQAIHQESDVVPENVDAVRAIAGDADAAESIATTNDALGI</sequence>
<evidence type="ECO:0000255" key="1">
    <source>
        <dbReference type="HAMAP-Rule" id="MF_00559"/>
    </source>
</evidence>